<protein>
    <recommendedName>
        <fullName>NFATC2-interacting protein</fullName>
    </recommendedName>
    <alternativeName>
        <fullName>Nuclear factor of activated T-cells, cytoplasmic 2-interacting protein</fullName>
    </alternativeName>
</protein>
<gene>
    <name type="primary">Nfatc2ip</name>
</gene>
<evidence type="ECO:0000250" key="1"/>
<evidence type="ECO:0000250" key="2">
    <source>
        <dbReference type="UniProtKB" id="O09130"/>
    </source>
</evidence>
<evidence type="ECO:0000250" key="3">
    <source>
        <dbReference type="UniProtKB" id="Q8NCF5"/>
    </source>
</evidence>
<evidence type="ECO:0000255" key="4"/>
<evidence type="ECO:0000255" key="5">
    <source>
        <dbReference type="PROSITE-ProRule" id="PRU00214"/>
    </source>
</evidence>
<evidence type="ECO:0000256" key="6">
    <source>
        <dbReference type="SAM" id="MobiDB-lite"/>
    </source>
</evidence>
<evidence type="ECO:0007744" key="7">
    <source>
    </source>
</evidence>
<feature type="chain" id="PRO_0000281011" description="NFATC2-interacting protein">
    <location>
        <begin position="1"/>
        <end position="414"/>
    </location>
</feature>
<feature type="domain" description="Ubiquitin-like" evidence="5">
    <location>
        <begin position="343"/>
        <end position="414"/>
    </location>
</feature>
<feature type="region of interest" description="Disordered" evidence="6">
    <location>
        <begin position="1"/>
        <end position="42"/>
    </location>
</feature>
<feature type="region of interest" description="Disordered" evidence="6">
    <location>
        <begin position="63"/>
        <end position="118"/>
    </location>
</feature>
<feature type="region of interest" description="Disordered" evidence="6">
    <location>
        <begin position="139"/>
        <end position="208"/>
    </location>
</feature>
<feature type="coiled-coil region" evidence="4">
    <location>
        <begin position="170"/>
        <end position="229"/>
    </location>
</feature>
<feature type="compositionally biased region" description="Basic residues" evidence="6">
    <location>
        <begin position="7"/>
        <end position="33"/>
    </location>
</feature>
<feature type="compositionally biased region" description="Low complexity" evidence="6">
    <location>
        <begin position="68"/>
        <end position="79"/>
    </location>
</feature>
<feature type="compositionally biased region" description="Low complexity" evidence="6">
    <location>
        <begin position="90"/>
        <end position="100"/>
    </location>
</feature>
<feature type="modified residue" description="Phosphoserine" evidence="7">
    <location>
        <position position="52"/>
    </location>
</feature>
<feature type="modified residue" description="Phosphoserine" evidence="7">
    <location>
        <position position="54"/>
    </location>
</feature>
<feature type="modified residue" description="Phosphoserine" evidence="7">
    <location>
        <position position="83"/>
    </location>
</feature>
<feature type="modified residue" description="Phosphoserine" evidence="2">
    <location>
        <position position="85"/>
    </location>
</feature>
<feature type="modified residue" description="Phosphoserine" evidence="7">
    <location>
        <position position="87"/>
    </location>
</feature>
<feature type="modified residue" description="Phosphoserine" evidence="3">
    <location>
        <position position="121"/>
    </location>
</feature>
<feature type="modified residue" description="Phosphoserine" evidence="3">
    <location>
        <position position="193"/>
    </location>
</feature>
<feature type="modified residue" description="Phosphoserine" evidence="3">
    <location>
        <position position="199"/>
    </location>
</feature>
<feature type="modified residue" description="Phosphoserine" evidence="3">
    <location>
        <position position="309"/>
    </location>
</feature>
<feature type="modified residue" description="Phosphothreonine" evidence="3">
    <location>
        <position position="311"/>
    </location>
</feature>
<feature type="modified residue" description="Phosphothreonine" evidence="3">
    <location>
        <position position="313"/>
    </location>
</feature>
<feature type="modified residue" description="Phosphoserine" evidence="3">
    <location>
        <position position="364"/>
    </location>
</feature>
<feature type="modified residue" description="Phosphoserine" evidence="3">
    <location>
        <position position="385"/>
    </location>
</feature>
<feature type="cross-link" description="Glycyl lysine isopeptide (Lys-Gly) (interchain with G-Cter in SUMO2)" evidence="3">
    <location>
        <position position="123"/>
    </location>
</feature>
<accession>Q6AYG7</accession>
<proteinExistence type="evidence at protein level"/>
<keyword id="KW-0175">Coiled coil</keyword>
<keyword id="KW-0963">Cytoplasm</keyword>
<keyword id="KW-1017">Isopeptide bond</keyword>
<keyword id="KW-0488">Methylation</keyword>
<keyword id="KW-0539">Nucleus</keyword>
<keyword id="KW-0597">Phosphoprotein</keyword>
<keyword id="KW-1185">Reference proteome</keyword>
<keyword id="KW-0832">Ubl conjugation</keyword>
<reference key="1">
    <citation type="journal article" date="2004" name="Genome Res.">
        <title>The status, quality, and expansion of the NIH full-length cDNA project: the Mammalian Gene Collection (MGC).</title>
        <authorList>
            <consortium name="The MGC Project Team"/>
        </authorList>
    </citation>
    <scope>NUCLEOTIDE SEQUENCE [LARGE SCALE MRNA]</scope>
    <source>
        <tissue>Testis</tissue>
    </source>
</reference>
<reference key="2">
    <citation type="journal article" date="2012" name="Nat. Commun.">
        <title>Quantitative maps of protein phosphorylation sites across 14 different rat organs and tissues.</title>
        <authorList>
            <person name="Lundby A."/>
            <person name="Secher A."/>
            <person name="Lage K."/>
            <person name="Nordsborg N.B."/>
            <person name="Dmytriyev A."/>
            <person name="Lundby C."/>
            <person name="Olsen J.V."/>
        </authorList>
    </citation>
    <scope>PHOSPHORYLATION [LARGE SCALE ANALYSIS] AT SER-52; SER-54; SER-83 AND SER-87</scope>
    <scope>IDENTIFICATION BY MASS SPECTROMETRY [LARGE SCALE ANALYSIS]</scope>
</reference>
<organism>
    <name type="scientific">Rattus norvegicus</name>
    <name type="common">Rat</name>
    <dbReference type="NCBI Taxonomy" id="10116"/>
    <lineage>
        <taxon>Eukaryota</taxon>
        <taxon>Metazoa</taxon>
        <taxon>Chordata</taxon>
        <taxon>Craniata</taxon>
        <taxon>Vertebrata</taxon>
        <taxon>Euteleostomi</taxon>
        <taxon>Mammalia</taxon>
        <taxon>Eutheria</taxon>
        <taxon>Euarchontoglires</taxon>
        <taxon>Glires</taxon>
        <taxon>Rodentia</taxon>
        <taxon>Myomorpha</taxon>
        <taxon>Muroidea</taxon>
        <taxon>Muridae</taxon>
        <taxon>Murinae</taxon>
        <taxon>Rattus</taxon>
    </lineage>
</organism>
<name>NF2IP_RAT</name>
<comment type="function">
    <text evidence="1">In T-helper 2 (Th2) cells, regulates the magnitude of NFAT-driven transcription of a specific subset of cytokine genes, including IL3, IL4, IL5 and IL13, but not IL2. Recruits PRMT1 to the IL4 promoter; this leads to enhancement of histone H4 'Arg-3'-methylation and facilitates subsequent histone acetylation at the IL4 locus, thus promotes robust cytokine expression (By similarity). Down-regulates formation of poly-SUMO chains by UBE2I/UBC9 (By similarity).</text>
</comment>
<comment type="subunit">
    <text evidence="1">Interacts with NFATC2, TRAF1, TRAF2 and PRMT1. Interacts with UBE2I/UBC9 (By similarity).</text>
</comment>
<comment type="subcellular location">
    <subcellularLocation>
        <location evidence="1">Nucleus</location>
    </subcellularLocation>
    <subcellularLocation>
        <location evidence="1">Cytoplasm</location>
    </subcellularLocation>
    <text evidence="1">TRAF1 is associated with a fraction of NFATC2IP in the cytoplasm and prevents its translocation to the nucleus.</text>
</comment>
<comment type="PTM">
    <text evidence="1">Methylation at the N-terminus by PRMT1 modulates interaction with the NFAT complex and results in augmented cytokine production.</text>
</comment>
<sequence>MAEPLRRRGPRSRGGRASRGARRARAARGRCPRAPRSPTRLIPDTVLVDLVSDSDEEVLEVVADPGEVPVARLPAPAAPEQDSDSDSEGAAEGPAGAPRTLVRRRRRLLDPGEAPVVPVYSGKVQSSLNLIPDNSSLLKLCPSEPEDEADLTDSGSPPSEDALPPGSPWKKKLRKKHEKEEKKMEEFPDQDISPLPQPSSRNKSRKHTEALQKLREVNKRLQDLRSCLSPKQHQSPALQNTDDEVVLVEGSVLPQNPRLFTLKIRCRADLVRLPVKTSEPLQNVVDHMASHLGVSPNRILLLFGETELSPTATPRTLKLGVADIIDCVVLASSSEDTETSQELRLRVQGKEKHQMLEISLSPDSPLKVLMSHYEEAMGLSGHKLSFFFDGTKLSGKELPTDLGLESGDLIEVWG</sequence>
<dbReference type="EMBL" id="BC079050">
    <property type="protein sequence ID" value="AAH79050.1"/>
    <property type="molecule type" value="mRNA"/>
</dbReference>
<dbReference type="RefSeq" id="NP_001007693.1">
    <property type="nucleotide sequence ID" value="NM_001007692.1"/>
</dbReference>
<dbReference type="SMR" id="Q6AYG7"/>
<dbReference type="FunCoup" id="Q6AYG7">
    <property type="interactions" value="1217"/>
</dbReference>
<dbReference type="STRING" id="10116.ENSRNOP00000073844"/>
<dbReference type="iPTMnet" id="Q6AYG7"/>
<dbReference type="PhosphoSitePlus" id="Q6AYG7"/>
<dbReference type="jPOST" id="Q6AYG7"/>
<dbReference type="PaxDb" id="10116-ENSRNOP00000041221"/>
<dbReference type="Ensembl" id="ENSRNOT00000090200.2">
    <property type="protein sequence ID" value="ENSRNOP00000073844.1"/>
    <property type="gene ID" value="ENSRNOG00000057384.2"/>
</dbReference>
<dbReference type="GeneID" id="308983"/>
<dbReference type="KEGG" id="rno:308983"/>
<dbReference type="UCSC" id="RGD:1359096">
    <property type="organism name" value="rat"/>
</dbReference>
<dbReference type="AGR" id="RGD:1359096"/>
<dbReference type="CTD" id="84901"/>
<dbReference type="RGD" id="1359096">
    <property type="gene designation" value="Nfatc2ip"/>
</dbReference>
<dbReference type="eggNOG" id="KOG1769">
    <property type="taxonomic scope" value="Eukaryota"/>
</dbReference>
<dbReference type="GeneTree" id="ENSGT00390000007119"/>
<dbReference type="HOGENOM" id="CLU_055132_1_0_1"/>
<dbReference type="InParanoid" id="Q6AYG7"/>
<dbReference type="OMA" id="NVVDHMA"/>
<dbReference type="OrthoDB" id="87271at9989"/>
<dbReference type="PhylomeDB" id="Q6AYG7"/>
<dbReference type="TreeFam" id="TF328600"/>
<dbReference type="PRO" id="PR:Q6AYG7"/>
<dbReference type="Proteomes" id="UP000002494">
    <property type="component" value="Chromosome 1"/>
</dbReference>
<dbReference type="Bgee" id="ENSRNOG00000057384">
    <property type="expression patterns" value="Expressed in testis and 18 other cell types or tissues"/>
</dbReference>
<dbReference type="GO" id="GO:0005737">
    <property type="term" value="C:cytoplasm"/>
    <property type="evidence" value="ECO:0007669"/>
    <property type="project" value="UniProtKB-SubCell"/>
</dbReference>
<dbReference type="GO" id="GO:0005634">
    <property type="term" value="C:nucleus"/>
    <property type="evidence" value="ECO:0007669"/>
    <property type="project" value="UniProtKB-SubCell"/>
</dbReference>
<dbReference type="GO" id="GO:0045944">
    <property type="term" value="P:positive regulation of transcription by RNA polymerase II"/>
    <property type="evidence" value="ECO:0000266"/>
    <property type="project" value="RGD"/>
</dbReference>
<dbReference type="CDD" id="cd17078">
    <property type="entry name" value="Ubl_SLD1_NFATC2ip"/>
    <property type="match status" value="1"/>
</dbReference>
<dbReference type="CDD" id="cd17079">
    <property type="entry name" value="Ubl_SLD2_NFATC2ip"/>
    <property type="match status" value="1"/>
</dbReference>
<dbReference type="Gene3D" id="3.10.20.90">
    <property type="entry name" value="Phosphatidylinositol 3-kinase Catalytic Subunit, Chain A, domain 1"/>
    <property type="match status" value="2"/>
</dbReference>
<dbReference type="InterPro" id="IPR052324">
    <property type="entry name" value="NFATC2-Int_DNA_Repair"/>
</dbReference>
<dbReference type="InterPro" id="IPR022617">
    <property type="entry name" value="Rad60/SUMO-like_dom"/>
</dbReference>
<dbReference type="InterPro" id="IPR000626">
    <property type="entry name" value="Ubiquitin-like_dom"/>
</dbReference>
<dbReference type="InterPro" id="IPR029071">
    <property type="entry name" value="Ubiquitin-like_domsf"/>
</dbReference>
<dbReference type="PANTHER" id="PTHR47187">
    <property type="entry name" value="NFATC2-INTERACTING PROTEIN"/>
    <property type="match status" value="1"/>
</dbReference>
<dbReference type="PANTHER" id="PTHR47187:SF1">
    <property type="entry name" value="NFATC2-INTERACTING PROTEIN"/>
    <property type="match status" value="1"/>
</dbReference>
<dbReference type="Pfam" id="PF11976">
    <property type="entry name" value="Rad60-SLD"/>
    <property type="match status" value="1"/>
</dbReference>
<dbReference type="SMART" id="SM00213">
    <property type="entry name" value="UBQ"/>
    <property type="match status" value="1"/>
</dbReference>
<dbReference type="SUPFAM" id="SSF54236">
    <property type="entry name" value="Ubiquitin-like"/>
    <property type="match status" value="2"/>
</dbReference>
<dbReference type="PROSITE" id="PS50053">
    <property type="entry name" value="UBIQUITIN_2"/>
    <property type="match status" value="1"/>
</dbReference>